<gene>
    <name type="ordered locus">MIMI_L906</name>
</gene>
<feature type="signal peptide" evidence="2">
    <location>
        <begin position="1"/>
        <end position="19"/>
    </location>
</feature>
<feature type="chain" id="PRO_0000041775" description="Probable cholinesterase">
    <location>
        <begin position="20"/>
        <end position="579"/>
    </location>
</feature>
<feature type="active site" description="Acyl-ester intermediate" evidence="3">
    <location>
        <position position="217"/>
    </location>
</feature>
<feature type="active site" description="Charge relay system" evidence="1">
    <location>
        <position position="337"/>
    </location>
</feature>
<feature type="active site" description="Charge relay system" evidence="1">
    <location>
        <position position="451"/>
    </location>
</feature>
<feature type="glycosylation site" description="N-linked (GlcNAc...) asparagine; by host" evidence="2">
    <location>
        <position position="77"/>
    </location>
</feature>
<feature type="glycosylation site" description="N-linked (GlcNAc...) asparagine; by host" evidence="2">
    <location>
        <position position="144"/>
    </location>
</feature>
<feature type="glycosylation site" description="N-linked (GlcNAc...) asparagine; by host" evidence="2">
    <location>
        <position position="257"/>
    </location>
</feature>
<feature type="glycosylation site" description="N-linked (GlcNAc...) asparagine; by host" evidence="2">
    <location>
        <position position="269"/>
    </location>
</feature>
<feature type="glycosylation site" description="N-linked (GlcNAc...) asparagine; by host" evidence="2">
    <location>
        <position position="283"/>
    </location>
</feature>
<feature type="glycosylation site" description="N-linked (GlcNAc...) asparagine; by host" evidence="2">
    <location>
        <position position="373"/>
    </location>
</feature>
<feature type="glycosylation site" description="N-linked (GlcNAc...) asparagine; by host" evidence="2">
    <location>
        <position position="394"/>
    </location>
</feature>
<feature type="glycosylation site" description="N-linked (GlcNAc...) asparagine; by host" evidence="2">
    <location>
        <position position="469"/>
    </location>
</feature>
<comment type="function">
    <text>May be involved in the disruption of the host membrane.</text>
</comment>
<comment type="catalytic activity">
    <reaction>
        <text>an acylcholine + H2O = a carboxylate + choline + H(+)</text>
        <dbReference type="Rhea" id="RHEA:21964"/>
        <dbReference type="ChEBI" id="CHEBI:15354"/>
        <dbReference type="ChEBI" id="CHEBI:15377"/>
        <dbReference type="ChEBI" id="CHEBI:15378"/>
        <dbReference type="ChEBI" id="CHEBI:29067"/>
        <dbReference type="ChEBI" id="CHEBI:35287"/>
        <dbReference type="EC" id="3.1.1.8"/>
    </reaction>
</comment>
<comment type="similarity">
    <text evidence="4">Belongs to the type-B carboxylesterase/lipase family.</text>
</comment>
<reference key="1">
    <citation type="journal article" date="2004" name="Science">
        <title>The 1.2-megabase genome sequence of Mimivirus.</title>
        <authorList>
            <person name="Raoult D."/>
            <person name="Audic S."/>
            <person name="Robert C."/>
            <person name="Abergel C."/>
            <person name="Renesto P."/>
            <person name="Ogata H."/>
            <person name="La Scola B."/>
            <person name="Susan M."/>
            <person name="Claverie J.-M."/>
        </authorList>
    </citation>
    <scope>NUCLEOTIDE SEQUENCE [LARGE SCALE GENOMIC DNA]</scope>
    <source>
        <strain>Rowbotham-Bradford</strain>
    </source>
</reference>
<evidence type="ECO:0000250" key="1"/>
<evidence type="ECO:0000255" key="2"/>
<evidence type="ECO:0000255" key="3">
    <source>
        <dbReference type="PROSITE-ProRule" id="PRU10039"/>
    </source>
</evidence>
<evidence type="ECO:0000305" key="4"/>
<organism>
    <name type="scientific">Acanthamoeba polyphaga mimivirus</name>
    <name type="common">APMV</name>
    <dbReference type="NCBI Taxonomy" id="212035"/>
    <lineage>
        <taxon>Viruses</taxon>
        <taxon>Varidnaviria</taxon>
        <taxon>Bamfordvirae</taxon>
        <taxon>Nucleocytoviricota</taxon>
        <taxon>Megaviricetes</taxon>
        <taxon>Imitervirales</taxon>
        <taxon>Mimiviridae</taxon>
        <taxon>Megamimivirinae</taxon>
        <taxon>Mimivirus</taxon>
        <taxon>Mimivirus bradfordmassiliense</taxon>
    </lineage>
</organism>
<organismHost>
    <name type="scientific">Acanthamoeba polyphaga</name>
    <name type="common">Amoeba</name>
    <dbReference type="NCBI Taxonomy" id="5757"/>
</organismHost>
<dbReference type="EC" id="3.1.1.8"/>
<dbReference type="EMBL" id="AY653733">
    <property type="protein sequence ID" value="AAV51163.1"/>
    <property type="molecule type" value="Genomic_DNA"/>
</dbReference>
<dbReference type="SMR" id="Q5UR02"/>
<dbReference type="ESTHER" id="mimvi-cxes">
    <property type="family name" value="Cholinesterase-like"/>
</dbReference>
<dbReference type="KEGG" id="vg:9925575"/>
<dbReference type="OrthoDB" id="29436at10239"/>
<dbReference type="Proteomes" id="UP000001134">
    <property type="component" value="Genome"/>
</dbReference>
<dbReference type="GO" id="GO:0004104">
    <property type="term" value="F:cholinesterase activity"/>
    <property type="evidence" value="ECO:0007669"/>
    <property type="project" value="UniProtKB-EC"/>
</dbReference>
<dbReference type="Gene3D" id="3.40.50.1820">
    <property type="entry name" value="alpha/beta hydrolase"/>
    <property type="match status" value="1"/>
</dbReference>
<dbReference type="InterPro" id="IPR029058">
    <property type="entry name" value="AB_hydrolase_fold"/>
</dbReference>
<dbReference type="InterPro" id="IPR002018">
    <property type="entry name" value="CarbesteraseB"/>
</dbReference>
<dbReference type="InterPro" id="IPR019826">
    <property type="entry name" value="Carboxylesterase_B_AS"/>
</dbReference>
<dbReference type="InterPro" id="IPR019819">
    <property type="entry name" value="Carboxylesterase_B_CS"/>
</dbReference>
<dbReference type="InterPro" id="IPR050309">
    <property type="entry name" value="Type-B_Carboxylest/Lipase"/>
</dbReference>
<dbReference type="PANTHER" id="PTHR11559">
    <property type="entry name" value="CARBOXYLESTERASE"/>
    <property type="match status" value="1"/>
</dbReference>
<dbReference type="Pfam" id="PF00135">
    <property type="entry name" value="COesterase"/>
    <property type="match status" value="1"/>
</dbReference>
<dbReference type="SUPFAM" id="SSF53474">
    <property type="entry name" value="alpha/beta-Hydrolases"/>
    <property type="match status" value="1"/>
</dbReference>
<dbReference type="PROSITE" id="PS00122">
    <property type="entry name" value="CARBOXYLESTERASE_B_1"/>
    <property type="match status" value="1"/>
</dbReference>
<dbReference type="PROSITE" id="PS00941">
    <property type="entry name" value="CARBOXYLESTERASE_B_2"/>
    <property type="match status" value="1"/>
</dbReference>
<sequence length="579" mass="64868">MTDHKIIMLLLLGIYCIQATQFTQVNIDNGPIKGTLQYVEGRAIRVFKGIPFAEPPVNNLRWKAPVPYTKKWHNPLNTTEYKPKCPQYVAPGTVPEPRGISEDCLYTNVWAPVPEYHGETFPVMVWIHGGAFISGSPEDFGVGNFSILAVTKRIIIVAASYRVNAFGFFSSELLGKSQLEARGVYGLLDQRLGLKWVKNNIAAFGGKSKDITIYGQSAGGISVCLQAVTPLNDLPGEKLFTRVIGSSGYCDILPMTNNSADAGLVQKLNCTTKECLYALPWQNITNAVGPGFLSFQPTVGINKFLPDQPISLLADRTNPRSKNFVPDIYMQGFTANEGTFVLYNYFPQTYDNPNTPGFPTQQMADALSIASGNYSAEFYYNDLAPLYSTEYNSNVTYPGQGFISRVDDIMACNTRRNMIYWQQSKKTKAHSWYFDSAPDTHIYPSWTKVFHESDVFYVARRCDGLWCTNLTCQQDNLGKTMNIYWNSAIRAASLTPKNKMDNLRDVPVWPQYGKNEVVMHFTAVGENKGPQTSVLFSSIISADGDYQYLQRCKILDRVRAEYYNIPALDPETYLNACSK</sequence>
<protein>
    <recommendedName>
        <fullName>Probable cholinesterase</fullName>
        <ecNumber>3.1.1.8</ecNumber>
    </recommendedName>
    <alternativeName>
        <fullName>Acylcholine acylhydrolase</fullName>
    </alternativeName>
</protein>
<proteinExistence type="inferred from homology"/>
<keyword id="KW-0325">Glycoprotein</keyword>
<keyword id="KW-0378">Hydrolase</keyword>
<keyword id="KW-1185">Reference proteome</keyword>
<keyword id="KW-0719">Serine esterase</keyword>
<keyword id="KW-0732">Signal</keyword>
<accession>Q5UR02</accession>
<name>CHLE_MIMIV</name>